<dbReference type="EMBL" id="AY560882">
    <property type="protein sequence ID" value="AAT44949.1"/>
    <property type="molecule type" value="mRNA"/>
</dbReference>
<dbReference type="EMBL" id="AC079279">
    <property type="protein sequence ID" value="AAG51186.1"/>
    <property type="molecule type" value="Genomic_DNA"/>
</dbReference>
<dbReference type="EMBL" id="CP002684">
    <property type="protein sequence ID" value="AEE32578.1"/>
    <property type="molecule type" value="Genomic_DNA"/>
</dbReference>
<dbReference type="PIR" id="E96543">
    <property type="entry name" value="E96543"/>
</dbReference>
<dbReference type="RefSeq" id="NP_175483.1">
    <property type="nucleotide sequence ID" value="NM_103950.1"/>
</dbReference>
<dbReference type="SMR" id="Q9C6P5"/>
<dbReference type="BioGRID" id="26715">
    <property type="interactions" value="10"/>
</dbReference>
<dbReference type="FunCoup" id="Q9C6P5">
    <property type="interactions" value="23"/>
</dbReference>
<dbReference type="IntAct" id="Q9C6P5">
    <property type="interactions" value="6"/>
</dbReference>
<dbReference type="STRING" id="3702.Q9C6P5"/>
<dbReference type="PaxDb" id="3702-AT1G50680.1"/>
<dbReference type="ProteomicsDB" id="236627"/>
<dbReference type="EnsemblPlants" id="AT1G50680.1">
    <property type="protein sequence ID" value="AT1G50680.1"/>
    <property type="gene ID" value="AT1G50680"/>
</dbReference>
<dbReference type="GeneID" id="841490"/>
<dbReference type="Gramene" id="AT1G50680.1">
    <property type="protein sequence ID" value="AT1G50680.1"/>
    <property type="gene ID" value="AT1G50680"/>
</dbReference>
<dbReference type="KEGG" id="ath:AT1G50680"/>
<dbReference type="Araport" id="AT1G50680"/>
<dbReference type="TAIR" id="AT1G50680"/>
<dbReference type="eggNOG" id="ENOG502QQEC">
    <property type="taxonomic scope" value="Eukaryota"/>
</dbReference>
<dbReference type="HOGENOM" id="CLU_038898_1_0_1"/>
<dbReference type="InParanoid" id="Q9C6P5"/>
<dbReference type="OMA" id="YQPKFAD"/>
<dbReference type="PhylomeDB" id="Q9C6P5"/>
<dbReference type="PRO" id="PR:Q9C6P5"/>
<dbReference type="Proteomes" id="UP000006548">
    <property type="component" value="Chromosome 1"/>
</dbReference>
<dbReference type="GO" id="GO:0005634">
    <property type="term" value="C:nucleus"/>
    <property type="evidence" value="ECO:0007669"/>
    <property type="project" value="UniProtKB-SubCell"/>
</dbReference>
<dbReference type="GO" id="GO:0003677">
    <property type="term" value="F:DNA binding"/>
    <property type="evidence" value="ECO:0007669"/>
    <property type="project" value="UniProtKB-KW"/>
</dbReference>
<dbReference type="GO" id="GO:0003700">
    <property type="term" value="F:DNA-binding transcription factor activity"/>
    <property type="evidence" value="ECO:0000250"/>
    <property type="project" value="TAIR"/>
</dbReference>
<dbReference type="GO" id="GO:0009873">
    <property type="term" value="P:ethylene-activated signaling pathway"/>
    <property type="evidence" value="ECO:0007669"/>
    <property type="project" value="UniProtKB-KW"/>
</dbReference>
<dbReference type="CDD" id="cd00018">
    <property type="entry name" value="AP2"/>
    <property type="match status" value="1"/>
</dbReference>
<dbReference type="CDD" id="cd10017">
    <property type="entry name" value="B3_DNA"/>
    <property type="match status" value="1"/>
</dbReference>
<dbReference type="FunFam" id="3.30.730.10:FF:000008">
    <property type="entry name" value="AP2 domain-containing protein RAP2.8"/>
    <property type="match status" value="1"/>
</dbReference>
<dbReference type="Gene3D" id="3.30.730.10">
    <property type="entry name" value="AP2/ERF domain"/>
    <property type="match status" value="1"/>
</dbReference>
<dbReference type="Gene3D" id="2.40.330.10">
    <property type="entry name" value="DNA-binding pseudobarrel domain"/>
    <property type="match status" value="1"/>
</dbReference>
<dbReference type="InterPro" id="IPR001471">
    <property type="entry name" value="AP2/ERF_dom"/>
</dbReference>
<dbReference type="InterPro" id="IPR036955">
    <property type="entry name" value="AP2/ERF_dom_sf"/>
</dbReference>
<dbReference type="InterPro" id="IPR003340">
    <property type="entry name" value="B3_DNA-bd"/>
</dbReference>
<dbReference type="InterPro" id="IPR016177">
    <property type="entry name" value="DNA-bd_dom_sf"/>
</dbReference>
<dbReference type="InterPro" id="IPR015300">
    <property type="entry name" value="DNA-bd_pseudobarrel_sf"/>
</dbReference>
<dbReference type="InterPro" id="IPR044800">
    <property type="entry name" value="LEC2-like"/>
</dbReference>
<dbReference type="PANTHER" id="PTHR31140:SF80">
    <property type="entry name" value="AP2_ERF AND B3 DOMAIN TRANSCRIPTION FACTOR"/>
    <property type="match status" value="1"/>
</dbReference>
<dbReference type="PANTHER" id="PTHR31140">
    <property type="entry name" value="B3 DOMAIN-CONTAINING TRANSCRIPTION FACTOR ABI3"/>
    <property type="match status" value="1"/>
</dbReference>
<dbReference type="Pfam" id="PF02362">
    <property type="entry name" value="B3"/>
    <property type="match status" value="1"/>
</dbReference>
<dbReference type="PRINTS" id="PR00367">
    <property type="entry name" value="ETHRSPELEMNT"/>
</dbReference>
<dbReference type="SMART" id="SM00380">
    <property type="entry name" value="AP2"/>
    <property type="match status" value="1"/>
</dbReference>
<dbReference type="SMART" id="SM01019">
    <property type="entry name" value="B3"/>
    <property type="match status" value="1"/>
</dbReference>
<dbReference type="SUPFAM" id="SSF54171">
    <property type="entry name" value="DNA-binding domain"/>
    <property type="match status" value="1"/>
</dbReference>
<dbReference type="SUPFAM" id="SSF101936">
    <property type="entry name" value="DNA-binding pseudobarrel domain"/>
    <property type="match status" value="1"/>
</dbReference>
<dbReference type="PROSITE" id="PS51032">
    <property type="entry name" value="AP2_ERF"/>
    <property type="match status" value="1"/>
</dbReference>
<dbReference type="PROSITE" id="PS50863">
    <property type="entry name" value="B3"/>
    <property type="match status" value="1"/>
</dbReference>
<accession>Q9C6P5</accession>
<accession>Q6J9P3</accession>
<keyword id="KW-0010">Activator</keyword>
<keyword id="KW-0238">DNA-binding</keyword>
<keyword id="KW-0936">Ethylene signaling pathway</keyword>
<keyword id="KW-0539">Nucleus</keyword>
<keyword id="KW-1185">Reference proteome</keyword>
<keyword id="KW-0804">Transcription</keyword>
<keyword id="KW-0805">Transcription regulation</keyword>
<organism>
    <name type="scientific">Arabidopsis thaliana</name>
    <name type="common">Mouse-ear cress</name>
    <dbReference type="NCBI Taxonomy" id="3702"/>
    <lineage>
        <taxon>Eukaryota</taxon>
        <taxon>Viridiplantae</taxon>
        <taxon>Streptophyta</taxon>
        <taxon>Embryophyta</taxon>
        <taxon>Tracheophyta</taxon>
        <taxon>Spermatophyta</taxon>
        <taxon>Magnoliopsida</taxon>
        <taxon>eudicotyledons</taxon>
        <taxon>Gunneridae</taxon>
        <taxon>Pentapetalae</taxon>
        <taxon>rosids</taxon>
        <taxon>malvids</taxon>
        <taxon>Brassicales</taxon>
        <taxon>Brassicaceae</taxon>
        <taxon>Camelineae</taxon>
        <taxon>Arabidopsis</taxon>
    </lineage>
</organism>
<protein>
    <recommendedName>
        <fullName>AP2/ERF and B3 domain-containing transcription factor At1g50680</fullName>
    </recommendedName>
    <alternativeName>
        <fullName>RAV1-like ethylene-responsive transcription factor At1g50680</fullName>
    </alternativeName>
</protein>
<evidence type="ECO:0000250" key="1"/>
<evidence type="ECO:0000255" key="2">
    <source>
        <dbReference type="PROSITE-ProRule" id="PRU00326"/>
    </source>
</evidence>
<evidence type="ECO:0000255" key="3">
    <source>
        <dbReference type="PROSITE-ProRule" id="PRU00366"/>
    </source>
</evidence>
<evidence type="ECO:0000305" key="4"/>
<reference key="1">
    <citation type="submission" date="2004-02" db="EMBL/GenBank/DDBJ databases">
        <title>Molecular cloning, expression, phylogenetic and functional characterization of the Arabidopsis AP2/EREBP transcription factor family.</title>
        <authorList>
            <person name="Pan Y."/>
            <person name="Gong W."/>
            <person name="Liu D."/>
            <person name="Fu Q."/>
            <person name="Mei W.-Q."/>
            <person name="Song W.-Q."/>
            <person name="Ma L.-G."/>
            <person name="Luo J.-C."/>
            <person name="Deng X.-W."/>
            <person name="Zhu Y.-X."/>
        </authorList>
    </citation>
    <scope>NUCLEOTIDE SEQUENCE [MRNA]</scope>
</reference>
<reference key="2">
    <citation type="journal article" date="2000" name="Nature">
        <title>Sequence and analysis of chromosome 1 of the plant Arabidopsis thaliana.</title>
        <authorList>
            <person name="Theologis A."/>
            <person name="Ecker J.R."/>
            <person name="Palm C.J."/>
            <person name="Federspiel N.A."/>
            <person name="Kaul S."/>
            <person name="White O."/>
            <person name="Alonso J."/>
            <person name="Altafi H."/>
            <person name="Araujo R."/>
            <person name="Bowman C.L."/>
            <person name="Brooks S.Y."/>
            <person name="Buehler E."/>
            <person name="Chan A."/>
            <person name="Chao Q."/>
            <person name="Chen H."/>
            <person name="Cheuk R.F."/>
            <person name="Chin C.W."/>
            <person name="Chung M.K."/>
            <person name="Conn L."/>
            <person name="Conway A.B."/>
            <person name="Conway A.R."/>
            <person name="Creasy T.H."/>
            <person name="Dewar K."/>
            <person name="Dunn P."/>
            <person name="Etgu P."/>
            <person name="Feldblyum T.V."/>
            <person name="Feng J.-D."/>
            <person name="Fong B."/>
            <person name="Fujii C.Y."/>
            <person name="Gill J.E."/>
            <person name="Goldsmith A.D."/>
            <person name="Haas B."/>
            <person name="Hansen N.F."/>
            <person name="Hughes B."/>
            <person name="Huizar L."/>
            <person name="Hunter J.L."/>
            <person name="Jenkins J."/>
            <person name="Johnson-Hopson C."/>
            <person name="Khan S."/>
            <person name="Khaykin E."/>
            <person name="Kim C.J."/>
            <person name="Koo H.L."/>
            <person name="Kremenetskaia I."/>
            <person name="Kurtz D.B."/>
            <person name="Kwan A."/>
            <person name="Lam B."/>
            <person name="Langin-Hooper S."/>
            <person name="Lee A."/>
            <person name="Lee J.M."/>
            <person name="Lenz C.A."/>
            <person name="Li J.H."/>
            <person name="Li Y.-P."/>
            <person name="Lin X."/>
            <person name="Liu S.X."/>
            <person name="Liu Z.A."/>
            <person name="Luros J.S."/>
            <person name="Maiti R."/>
            <person name="Marziali A."/>
            <person name="Militscher J."/>
            <person name="Miranda M."/>
            <person name="Nguyen M."/>
            <person name="Nierman W.C."/>
            <person name="Osborne B.I."/>
            <person name="Pai G."/>
            <person name="Peterson J."/>
            <person name="Pham P.K."/>
            <person name="Rizzo M."/>
            <person name="Rooney T."/>
            <person name="Rowley D."/>
            <person name="Sakano H."/>
            <person name="Salzberg S.L."/>
            <person name="Schwartz J.R."/>
            <person name="Shinn P."/>
            <person name="Southwick A.M."/>
            <person name="Sun H."/>
            <person name="Tallon L.J."/>
            <person name="Tambunga G."/>
            <person name="Toriumi M.J."/>
            <person name="Town C.D."/>
            <person name="Utterback T."/>
            <person name="Van Aken S."/>
            <person name="Vaysberg M."/>
            <person name="Vysotskaia V.S."/>
            <person name="Walker M."/>
            <person name="Wu D."/>
            <person name="Yu G."/>
            <person name="Fraser C.M."/>
            <person name="Venter J.C."/>
            <person name="Davis R.W."/>
        </authorList>
    </citation>
    <scope>NUCLEOTIDE SEQUENCE [LARGE SCALE GENOMIC DNA]</scope>
    <source>
        <strain>cv. Columbia</strain>
    </source>
</reference>
<reference key="3">
    <citation type="journal article" date="2017" name="Plant J.">
        <title>Araport11: a complete reannotation of the Arabidopsis thaliana reference genome.</title>
        <authorList>
            <person name="Cheng C.Y."/>
            <person name="Krishnakumar V."/>
            <person name="Chan A.P."/>
            <person name="Thibaud-Nissen F."/>
            <person name="Schobel S."/>
            <person name="Town C.D."/>
        </authorList>
    </citation>
    <scope>GENOME REANNOTATION</scope>
    <source>
        <strain>cv. Columbia</strain>
    </source>
</reference>
<reference key="4">
    <citation type="journal article" date="2006" name="Plant Physiol.">
        <title>Genome-wide analysis of the ERF gene family in Arabidopsis and rice.</title>
        <authorList>
            <person name="Nakano T."/>
            <person name="Suzuki K."/>
            <person name="Fujimura T."/>
            <person name="Shinshi H."/>
        </authorList>
    </citation>
    <scope>GENE FAMILY</scope>
    <scope>NOMENCLATURE</scope>
</reference>
<reference key="5">
    <citation type="journal article" date="2008" name="Trends Plant Sci.">
        <title>The plant B3 superfamily.</title>
        <authorList>
            <person name="Swaminathan K."/>
            <person name="Peterson K."/>
            <person name="Jack T."/>
        </authorList>
    </citation>
    <scope>GENE FAMILY</scope>
</reference>
<proteinExistence type="evidence at transcript level"/>
<gene>
    <name type="ordered locus">At1g50680</name>
    <name type="ORF">F17J6.20</name>
</gene>
<comment type="function">
    <text evidence="1">Probably acts as a transcriptional activator. Binds to the GCC-box pathogenesis-related promoter element. May be involved in the regulation of gene expression by stress factors and by components of stress signal transduction pathways (By similarity).</text>
</comment>
<comment type="subcellular location">
    <subcellularLocation>
        <location evidence="4">Nucleus</location>
    </subcellularLocation>
</comment>
<comment type="similarity">
    <text evidence="4">Belongs to the AP2/ERF transcription factor family. RAV subfamily.</text>
</comment>
<sequence>MRLDDEPENALVVSSSPKTVVASGNVKYKGVVQQQNGHWGAQIYADHKRIWLGTFKSADEAATAYDSASIKLRSFDANSHRNFPWSTITLNEPDFQNCYTTETVLNMIRDGSYQHKFRDFLRIRSQIVASINIGGPKQARGEVNQESDKCFSCTQLFQKELTPSDVGKLNRLVIPKKYAVKYMPFISADQSEKEEGEIVGSVEDVEVVFYDRAMRQWKFRYCYWKSSQSFVFTRGWNSFVKEKNLKEKDVIAFYTCDVPNNVKTLEGQRKNFLMIDVHCFSDNGSVVAEEVSMTVHDSSVQVKKTENLVSSMLEDKETKSEENKGGFMLFGVRIECP</sequence>
<name>RAVL2_ARATH</name>
<feature type="chain" id="PRO_0000290434" description="AP2/ERF and B3 domain-containing transcription factor At1g50680">
    <location>
        <begin position="1"/>
        <end position="337"/>
    </location>
</feature>
<feature type="DNA-binding region" description="AP2/ERF" evidence="3">
    <location>
        <begin position="27"/>
        <end position="84"/>
    </location>
</feature>
<feature type="DNA-binding region" description="TF-B3" evidence="2">
    <location>
        <begin position="157"/>
        <end position="271"/>
    </location>
</feature>
<feature type="sequence conflict" description="In Ref. 1; AAT44949." evidence="4" ref="1">
    <original>S</original>
    <variation>G</variation>
    <location>
        <position position="238"/>
    </location>
</feature>